<feature type="chain" id="PRO_0000214411" description="FAD assembly factor SdhE">
    <location>
        <begin position="1"/>
        <end position="84"/>
    </location>
</feature>
<name>SDHE_PSE14</name>
<dbReference type="EMBL" id="CP000058">
    <property type="protein sequence ID" value="AAZ35919.1"/>
    <property type="molecule type" value="Genomic_DNA"/>
</dbReference>
<dbReference type="RefSeq" id="WP_003378499.1">
    <property type="nucleotide sequence ID" value="NC_005773.3"/>
</dbReference>
<dbReference type="SMR" id="Q48EU3"/>
<dbReference type="KEGG" id="psp:PSPPH_3958"/>
<dbReference type="eggNOG" id="COG2938">
    <property type="taxonomic scope" value="Bacteria"/>
</dbReference>
<dbReference type="HOGENOM" id="CLU_103054_2_2_6"/>
<dbReference type="Proteomes" id="UP000000551">
    <property type="component" value="Chromosome"/>
</dbReference>
<dbReference type="GO" id="GO:0005737">
    <property type="term" value="C:cytoplasm"/>
    <property type="evidence" value="ECO:0007669"/>
    <property type="project" value="UniProtKB-SubCell"/>
</dbReference>
<dbReference type="GO" id="GO:0006105">
    <property type="term" value="P:succinate metabolic process"/>
    <property type="evidence" value="ECO:0007669"/>
    <property type="project" value="TreeGrafter"/>
</dbReference>
<dbReference type="Gene3D" id="1.10.150.250">
    <property type="entry name" value="Flavinator of succinate dehydrogenase"/>
    <property type="match status" value="1"/>
</dbReference>
<dbReference type="InterPro" id="IPR005631">
    <property type="entry name" value="SDH"/>
</dbReference>
<dbReference type="InterPro" id="IPR036714">
    <property type="entry name" value="SDH_sf"/>
</dbReference>
<dbReference type="InterPro" id="IPR050531">
    <property type="entry name" value="SdhE_FAD_assembly_factor"/>
</dbReference>
<dbReference type="PANTHER" id="PTHR39585">
    <property type="entry name" value="FAD ASSEMBLY FACTOR SDHE"/>
    <property type="match status" value="1"/>
</dbReference>
<dbReference type="PANTHER" id="PTHR39585:SF1">
    <property type="entry name" value="FAD ASSEMBLY FACTOR SDHE"/>
    <property type="match status" value="1"/>
</dbReference>
<dbReference type="Pfam" id="PF03937">
    <property type="entry name" value="Sdh5"/>
    <property type="match status" value="1"/>
</dbReference>
<dbReference type="SUPFAM" id="SSF109910">
    <property type="entry name" value="YgfY-like"/>
    <property type="match status" value="1"/>
</dbReference>
<protein>
    <recommendedName>
        <fullName>FAD assembly factor SdhE</fullName>
    </recommendedName>
</protein>
<reference key="1">
    <citation type="journal article" date="2005" name="J. Bacteriol.">
        <title>Whole-genome sequence analysis of Pseudomonas syringae pv. phaseolicola 1448A reveals divergence among pathovars in genes involved in virulence and transposition.</title>
        <authorList>
            <person name="Joardar V."/>
            <person name="Lindeberg M."/>
            <person name="Jackson R.W."/>
            <person name="Selengut J."/>
            <person name="Dodson R."/>
            <person name="Brinkac L.M."/>
            <person name="Daugherty S.C."/>
            <person name="DeBoy R.T."/>
            <person name="Durkin A.S."/>
            <person name="Gwinn Giglio M."/>
            <person name="Madupu R."/>
            <person name="Nelson W.C."/>
            <person name="Rosovitz M.J."/>
            <person name="Sullivan S.A."/>
            <person name="Crabtree J."/>
            <person name="Creasy T."/>
            <person name="Davidsen T.M."/>
            <person name="Haft D.H."/>
            <person name="Zafar N."/>
            <person name="Zhou L."/>
            <person name="Halpin R."/>
            <person name="Holley T."/>
            <person name="Khouri H.M."/>
            <person name="Feldblyum T.V."/>
            <person name="White O."/>
            <person name="Fraser C.M."/>
            <person name="Chatterjee A.K."/>
            <person name="Cartinhour S."/>
            <person name="Schneider D."/>
            <person name="Mansfield J.W."/>
            <person name="Collmer A."/>
            <person name="Buell R."/>
        </authorList>
    </citation>
    <scope>NUCLEOTIDE SEQUENCE [LARGE SCALE GENOMIC DNA]</scope>
    <source>
        <strain>1448A / Race 6</strain>
    </source>
</reference>
<comment type="function">
    <text evidence="1">An FAD assembly protein, which accelerates covalent attachment of the cofactor into other proteins. Plays an essential role in the assembly of succinate dehydrogenase (SDH, respiratory complex II), an enzyme complex that is a component of both the tricarboxylic acid cycle and the electron transport chain, and which couples the oxidation of succinate to fumarate with the reduction of ubiquinone (coenzyme Q) to ubiquinol. Required for flavinylation (covalent attachment of FAD) of the flavoprotein subunit SdhA of SDH and other flavinylated proteins as well.</text>
</comment>
<comment type="subcellular location">
    <subcellularLocation>
        <location evidence="1">Cytoplasm</location>
    </subcellularLocation>
</comment>
<comment type="similarity">
    <text evidence="2">Belongs to the SdhE FAD assembly factor family.</text>
</comment>
<evidence type="ECO:0000250" key="1">
    <source>
        <dbReference type="UniProtKB" id="G4V4G2"/>
    </source>
</evidence>
<evidence type="ECO:0000305" key="2"/>
<organism>
    <name type="scientific">Pseudomonas savastanoi pv. phaseolicola (strain 1448A / Race 6)</name>
    <name type="common">Pseudomonas syringae pv. phaseolicola (strain 1448A / Race 6)</name>
    <dbReference type="NCBI Taxonomy" id="264730"/>
    <lineage>
        <taxon>Bacteria</taxon>
        <taxon>Pseudomonadati</taxon>
        <taxon>Pseudomonadota</taxon>
        <taxon>Gammaproteobacteria</taxon>
        <taxon>Pseudomonadales</taxon>
        <taxon>Pseudomonadaceae</taxon>
        <taxon>Pseudomonas</taxon>
    </lineage>
</organism>
<keyword id="KW-0143">Chaperone</keyword>
<keyword id="KW-0963">Cytoplasm</keyword>
<gene>
    <name type="primary">sdhE</name>
    <name type="ordered locus">PSPPH_3958</name>
</gene>
<proteinExistence type="inferred from homology"/>
<accession>Q48EU3</accession>
<sequence>MVEDVELNRLYWHSRRGMLELDVLLVPFVREVYPHLNDVDRDLYRRLLTCEDQDMFGWFMQRAESEDAELQRMVRMILDRVQPK</sequence>